<protein>
    <recommendedName>
        <fullName>ATP-dependent permease PDR15</fullName>
    </recommendedName>
</protein>
<comment type="interaction">
    <interactant intactId="EBI-13072">
        <id>Q04182</id>
    </interactant>
    <interactant intactId="EBI-20799497">
        <id>P32901</id>
        <label>PTR2</label>
    </interactant>
    <organismsDiffer>false</organismsDiffer>
    <experiments>2</experiments>
</comment>
<comment type="interaction">
    <interactant intactId="EBI-13072">
        <id>Q04182</id>
    </interactant>
    <interactant intactId="EBI-29677">
        <id>P32804</id>
        <label>ZRT1</label>
    </interactant>
    <organismsDiffer>false</organismsDiffer>
    <experiments>2</experiments>
</comment>
<comment type="subcellular location">
    <subcellularLocation>
        <location>Membrane</location>
        <topology>Multi-pass membrane protein</topology>
    </subcellularLocation>
</comment>
<comment type="induction">
    <text evidence="4">Transcriptionally regulated by PDR8.</text>
</comment>
<comment type="similarity">
    <text evidence="5">Belongs to the ABC transporter superfamily. ABCG family. PDR (TC 3.A.1.205) subfamily.</text>
</comment>
<reference key="1">
    <citation type="journal article" date="1997" name="Nature">
        <title>The nucleotide sequence of Saccharomyces cerevisiae chromosome IV.</title>
        <authorList>
            <person name="Jacq C."/>
            <person name="Alt-Moerbe J."/>
            <person name="Andre B."/>
            <person name="Arnold W."/>
            <person name="Bahr A."/>
            <person name="Ballesta J.P.G."/>
            <person name="Bargues M."/>
            <person name="Baron L."/>
            <person name="Becker A."/>
            <person name="Biteau N."/>
            <person name="Bloecker H."/>
            <person name="Blugeon C."/>
            <person name="Boskovic J."/>
            <person name="Brandt P."/>
            <person name="Brueckner M."/>
            <person name="Buitrago M.J."/>
            <person name="Coster F."/>
            <person name="Delaveau T."/>
            <person name="del Rey F."/>
            <person name="Dujon B."/>
            <person name="Eide L.G."/>
            <person name="Garcia-Cantalejo J.M."/>
            <person name="Goffeau A."/>
            <person name="Gomez-Peris A."/>
            <person name="Granotier C."/>
            <person name="Hanemann V."/>
            <person name="Hankeln T."/>
            <person name="Hoheisel J.D."/>
            <person name="Jaeger W."/>
            <person name="Jimenez A."/>
            <person name="Jonniaux J.-L."/>
            <person name="Kraemer C."/>
            <person name="Kuester H."/>
            <person name="Laamanen P."/>
            <person name="Legros Y."/>
            <person name="Louis E.J."/>
            <person name="Moeller-Rieker S."/>
            <person name="Monnet A."/>
            <person name="Moro M."/>
            <person name="Mueller-Auer S."/>
            <person name="Nussbaumer B."/>
            <person name="Paricio N."/>
            <person name="Paulin L."/>
            <person name="Perea J."/>
            <person name="Perez-Alonso M."/>
            <person name="Perez-Ortin J.E."/>
            <person name="Pohl T.M."/>
            <person name="Prydz H."/>
            <person name="Purnelle B."/>
            <person name="Rasmussen S.W."/>
            <person name="Remacha M.A."/>
            <person name="Revuelta J.L."/>
            <person name="Rieger M."/>
            <person name="Salom D."/>
            <person name="Saluz H.P."/>
            <person name="Saiz J.E."/>
            <person name="Saren A.-M."/>
            <person name="Schaefer M."/>
            <person name="Scharfe M."/>
            <person name="Schmidt E.R."/>
            <person name="Schneider C."/>
            <person name="Scholler P."/>
            <person name="Schwarz S."/>
            <person name="Soler-Mira A."/>
            <person name="Urrestarazu L.A."/>
            <person name="Verhasselt P."/>
            <person name="Vissers S."/>
            <person name="Voet M."/>
            <person name="Volckaert G."/>
            <person name="Wagner G."/>
            <person name="Wambutt R."/>
            <person name="Wedler E."/>
            <person name="Wedler H."/>
            <person name="Woelfl S."/>
            <person name="Harris D.E."/>
            <person name="Bowman S."/>
            <person name="Brown D."/>
            <person name="Churcher C.M."/>
            <person name="Connor R."/>
            <person name="Dedman K."/>
            <person name="Gentles S."/>
            <person name="Hamlin N."/>
            <person name="Hunt S."/>
            <person name="Jones L."/>
            <person name="McDonald S."/>
            <person name="Murphy L.D."/>
            <person name="Niblett D."/>
            <person name="Odell C."/>
            <person name="Oliver K."/>
            <person name="Rajandream M.A."/>
            <person name="Richards C."/>
            <person name="Shore L."/>
            <person name="Walsh S.V."/>
            <person name="Barrell B.G."/>
            <person name="Dietrich F.S."/>
            <person name="Mulligan J.T."/>
            <person name="Allen E."/>
            <person name="Araujo R."/>
            <person name="Aviles E."/>
            <person name="Berno A."/>
            <person name="Carpenter J."/>
            <person name="Chen E."/>
            <person name="Cherry J.M."/>
            <person name="Chung E."/>
            <person name="Duncan M."/>
            <person name="Hunicke-Smith S."/>
            <person name="Hyman R.W."/>
            <person name="Komp C."/>
            <person name="Lashkari D."/>
            <person name="Lew H."/>
            <person name="Lin D."/>
            <person name="Mosedale D."/>
            <person name="Nakahara K."/>
            <person name="Namath A."/>
            <person name="Oefner P."/>
            <person name="Oh C."/>
            <person name="Petel F.X."/>
            <person name="Roberts D."/>
            <person name="Schramm S."/>
            <person name="Schroeder M."/>
            <person name="Shogren T."/>
            <person name="Shroff N."/>
            <person name="Winant A."/>
            <person name="Yelton M.A."/>
            <person name="Botstein D."/>
            <person name="Davis R.W."/>
            <person name="Johnston M."/>
            <person name="Andrews S."/>
            <person name="Brinkman R."/>
            <person name="Cooper J."/>
            <person name="Ding H."/>
            <person name="Du Z."/>
            <person name="Favello A."/>
            <person name="Fulton L."/>
            <person name="Gattung S."/>
            <person name="Greco T."/>
            <person name="Hallsworth K."/>
            <person name="Hawkins J."/>
            <person name="Hillier L.W."/>
            <person name="Jier M."/>
            <person name="Johnson D."/>
            <person name="Johnston L."/>
            <person name="Kirsten J."/>
            <person name="Kucaba T."/>
            <person name="Langston Y."/>
            <person name="Latreille P."/>
            <person name="Le T."/>
            <person name="Mardis E."/>
            <person name="Menezes S."/>
            <person name="Miller N."/>
            <person name="Nhan M."/>
            <person name="Pauley A."/>
            <person name="Peluso D."/>
            <person name="Rifkin L."/>
            <person name="Riles L."/>
            <person name="Taich A."/>
            <person name="Trevaskis E."/>
            <person name="Vignati D."/>
            <person name="Wilcox L."/>
            <person name="Wohldman P."/>
            <person name="Vaudin M."/>
            <person name="Wilson R."/>
            <person name="Waterston R."/>
            <person name="Albermann K."/>
            <person name="Hani J."/>
            <person name="Heumann K."/>
            <person name="Kleine K."/>
            <person name="Mewes H.-W."/>
            <person name="Zollner A."/>
            <person name="Zaccaria P."/>
        </authorList>
    </citation>
    <scope>NUCLEOTIDE SEQUENCE [LARGE SCALE GENOMIC DNA]</scope>
    <source>
        <strain>ATCC 204508 / S288c</strain>
    </source>
</reference>
<reference key="2">
    <citation type="journal article" date="2014" name="G3 (Bethesda)">
        <title>The reference genome sequence of Saccharomyces cerevisiae: Then and now.</title>
        <authorList>
            <person name="Engel S.R."/>
            <person name="Dietrich F.S."/>
            <person name="Fisk D.G."/>
            <person name="Binkley G."/>
            <person name="Balakrishnan R."/>
            <person name="Costanzo M.C."/>
            <person name="Dwight S.S."/>
            <person name="Hitz B.C."/>
            <person name="Karra K."/>
            <person name="Nash R.S."/>
            <person name="Weng S."/>
            <person name="Wong E.D."/>
            <person name="Lloyd P."/>
            <person name="Skrzypek M.S."/>
            <person name="Miyasato S.R."/>
            <person name="Simison M."/>
            <person name="Cherry J.M."/>
        </authorList>
    </citation>
    <scope>GENOME REANNOTATION</scope>
    <source>
        <strain>ATCC 204508 / S288c</strain>
    </source>
</reference>
<reference key="3">
    <citation type="journal article" date="2003" name="J. Biol. Chem.">
        <title>A general strategy to uncover transcription factor properties identifies a new regulator of drug resistance in yeast.</title>
        <authorList>
            <person name="Hikkel I."/>
            <person name="Lucau-Danila A."/>
            <person name="Delaveau T."/>
            <person name="Marc P."/>
            <person name="Devaux F."/>
            <person name="Jacq C."/>
        </authorList>
    </citation>
    <scope>INDUCTION</scope>
</reference>
<reference key="4">
    <citation type="journal article" date="2006" name="Proc. Natl. Acad. Sci. U.S.A.">
        <title>A global topology map of the Saccharomyces cerevisiae membrane proteome.</title>
        <authorList>
            <person name="Kim H."/>
            <person name="Melen K."/>
            <person name="Oesterberg M."/>
            <person name="von Heijne G."/>
        </authorList>
    </citation>
    <scope>TOPOLOGY [LARGE SCALE ANALYSIS]</scope>
    <source>
        <strain>ATCC 208353 / W303-1A</strain>
    </source>
</reference>
<sequence>MSSDIRDVEERNSRSSSSSSSSNSAAQSIGQHPYRGFDSEAAERVHELARTLTSQSLLYTANSNNSSSSNHNAHNADSRSVFSTDMEGVNPVFTNPDTPGYNPKLDPNSDQFSSTAWVQNMANICTSDPDFYKPYSLGCVWKNLSASGDSADVSYQSTFANIVPKLLTKGLRLLKPSKEEDTFQILKPMDGCLNPGELLVVLGRPGSGCTTLLKSISSNSHGFKIAKDSIVSYNGLSSSDIRKHYRGEVVYNAESDIHLPHLTVYQTLFTVARMKTPQNRIKGVDREAYANHVTEVAMATYGLSHTRDTKVGNDLVRGVSGGERKRVSIAEVAICGARFQCWDNATRGLDSATALEFIRALKTQADIGKTAATVAIYQCSQDAYDLFDKVCVLDDGYQLYFGPAKDAKKYFQDMGYYCPPRQTTADFLTSITSPTERIISKEFIEKGTRVPQTPKDMAEYWLQSESYKNLIKDIDSTLEKNTDEARNIIRDAHHAKQAKRAPPSSPYVVNYGMQVKYLLIRNFWRMKQSASVTLWQVIGNSVMAFILGSMFYKVMKKNDTSTFYFRGAAMFFAILFNAFSCLLEIFSLYETRPITEKHRTYSLYHPSADAFASVLSEMPPKLITAVCFNIIFYFLVDFRRNGGVFFFYFLINVIATFTLSHLFRCVGSLTKTLQEAMVPASMLLLAISMYTGFAIPKTKILGWSIWIWYINPLAYLFESLMINEFHDRRFPCAQYIPAGPAYQNITGTQRVCSAVGAYPGNDYVLGDDFLKESYDYEHKHKWRGFGIGMAYVVFFFFVYLILCEYNEGAKQKGEMVVFLRSKIKQLKKEGKLQEKHRPGDIENNAGSSPDSATTEKKILDDSSEGSDSSSDNAGLGLSKSEAIFHWRDLCYDVPIKGGQRRILNNVDGWVKPGTLTALMGASGAGKTTLLDCLAERVTMGVITGNIFVDGRLRDESFPRSIGYCQQQDLHLKTATVRESLRFSAYLRQPSSVSIEEKNRYVEEVIKILEMQQYSDAVVGVAGEGLNVEQRKRLTIGVELAARPKLLVFLDEPTSGLDSQTAWDTCQLMRKLATHGQAILCTIHQPSAILMQQFDRLLFLQKGGQTVYFGDLGEGCKTMIDYFESKGAHKCPPDANPAEWMLEVVGAAPGSHATQDYNEVWRNSDEYKAVQEELDWMEKNLPGRSKEPTAEEHKPFAASLYYQFKMVTIRLFQQYWRSPDYLWSKFILTIFNQVFIGFTFFKADRSLQGLQNQMLSIFMYTVIFNPILQQYLPSFVQQRDLYEARERPSRTFSWLAFFLSQIIVEIPWNILAGTIAYCIYYYAVGFYANASAAGQLHERGALFWLFSIAFYVYIGSMGLLMISFNEVAETAAHMGTLLFTMALSFCGVMATPKVMPRFWIFMYRVSPLTYMIDALLALGVANVDVKCSNYEMVKFTPPSGTTCGDYMASYIKLAGTGYLSDPSATDICSFCAVSTTNAFLATFSSHYYRRWRNYGIFICYIAFDYIAATFLYWLSRVPKKNGKISEKPKK</sequence>
<organism>
    <name type="scientific">Saccharomyces cerevisiae (strain ATCC 204508 / S288c)</name>
    <name type="common">Baker's yeast</name>
    <dbReference type="NCBI Taxonomy" id="559292"/>
    <lineage>
        <taxon>Eukaryota</taxon>
        <taxon>Fungi</taxon>
        <taxon>Dikarya</taxon>
        <taxon>Ascomycota</taxon>
        <taxon>Saccharomycotina</taxon>
        <taxon>Saccharomycetes</taxon>
        <taxon>Saccharomycetales</taxon>
        <taxon>Saccharomycetaceae</taxon>
        <taxon>Saccharomyces</taxon>
    </lineage>
</organism>
<gene>
    <name type="primary">PDR15</name>
    <name type="ordered locus">YDR406W</name>
    <name type="ORF">D9509.24</name>
</gene>
<accession>Q04182</accession>
<accession>D6VT38</accession>
<proteinExistence type="evidence at protein level"/>
<evidence type="ECO:0000255" key="1"/>
<evidence type="ECO:0000255" key="2">
    <source>
        <dbReference type="PROSITE-ProRule" id="PRU00434"/>
    </source>
</evidence>
<evidence type="ECO:0000256" key="3">
    <source>
        <dbReference type="SAM" id="MobiDB-lite"/>
    </source>
</evidence>
<evidence type="ECO:0000269" key="4">
    <source>
    </source>
</evidence>
<evidence type="ECO:0000305" key="5"/>
<name>PDR15_YEAST</name>
<keyword id="KW-0067">ATP-binding</keyword>
<keyword id="KW-0325">Glycoprotein</keyword>
<keyword id="KW-0472">Membrane</keyword>
<keyword id="KW-0547">Nucleotide-binding</keyword>
<keyword id="KW-1185">Reference proteome</keyword>
<keyword id="KW-0677">Repeat</keyword>
<keyword id="KW-0812">Transmembrane</keyword>
<keyword id="KW-1133">Transmembrane helix</keyword>
<keyword id="KW-0813">Transport</keyword>
<dbReference type="EMBL" id="U32274">
    <property type="protein sequence ID" value="AAB64846.1"/>
    <property type="molecule type" value="Genomic_DNA"/>
</dbReference>
<dbReference type="EMBL" id="BK006938">
    <property type="protein sequence ID" value="DAA12248.1"/>
    <property type="molecule type" value="Genomic_DNA"/>
</dbReference>
<dbReference type="PIR" id="S69688">
    <property type="entry name" value="S69688"/>
</dbReference>
<dbReference type="RefSeq" id="NP_010694.1">
    <property type="nucleotide sequence ID" value="NM_001180714.1"/>
</dbReference>
<dbReference type="SMR" id="Q04182"/>
<dbReference type="BioGRID" id="32466">
    <property type="interactions" value="79"/>
</dbReference>
<dbReference type="DIP" id="DIP-8040N"/>
<dbReference type="FunCoup" id="Q04182">
    <property type="interactions" value="299"/>
</dbReference>
<dbReference type="IntAct" id="Q04182">
    <property type="interactions" value="67"/>
</dbReference>
<dbReference type="MINT" id="Q04182"/>
<dbReference type="STRING" id="4932.YDR406W"/>
<dbReference type="GlyCosmos" id="Q04182">
    <property type="glycosylation" value="2 sites, No reported glycans"/>
</dbReference>
<dbReference type="GlyGen" id="Q04182">
    <property type="glycosylation" value="2 sites"/>
</dbReference>
<dbReference type="iPTMnet" id="Q04182"/>
<dbReference type="PaxDb" id="4932-YDR406W"/>
<dbReference type="PeptideAtlas" id="Q04182"/>
<dbReference type="EnsemblFungi" id="YDR406W_mRNA">
    <property type="protein sequence ID" value="YDR406W"/>
    <property type="gene ID" value="YDR406W"/>
</dbReference>
<dbReference type="GeneID" id="852015"/>
<dbReference type="KEGG" id="sce:YDR406W"/>
<dbReference type="AGR" id="SGD:S000002814"/>
<dbReference type="SGD" id="S000002814">
    <property type="gene designation" value="PDR15"/>
</dbReference>
<dbReference type="VEuPathDB" id="FungiDB:YDR406W"/>
<dbReference type="eggNOG" id="KOG0065">
    <property type="taxonomic scope" value="Eukaryota"/>
</dbReference>
<dbReference type="GeneTree" id="ENSGT00940000176297"/>
<dbReference type="HOGENOM" id="CLU_000604_35_0_1"/>
<dbReference type="InParanoid" id="Q04182"/>
<dbReference type="OMA" id="WHDVCYE"/>
<dbReference type="OrthoDB" id="245989at2759"/>
<dbReference type="BioCyc" id="YEAST:G3O-29950-MONOMER"/>
<dbReference type="BioGRID-ORCS" id="852015">
    <property type="hits" value="0 hits in 10 CRISPR screens"/>
</dbReference>
<dbReference type="PHI-base" id="PHI:2815"/>
<dbReference type="PRO" id="PR:Q04182"/>
<dbReference type="Proteomes" id="UP000002311">
    <property type="component" value="Chromosome IV"/>
</dbReference>
<dbReference type="RNAct" id="Q04182">
    <property type="molecule type" value="protein"/>
</dbReference>
<dbReference type="GO" id="GO:0071944">
    <property type="term" value="C:cell periphery"/>
    <property type="evidence" value="ECO:0007005"/>
    <property type="project" value="SGD"/>
</dbReference>
<dbReference type="GO" id="GO:0016020">
    <property type="term" value="C:membrane"/>
    <property type="evidence" value="ECO:0007669"/>
    <property type="project" value="UniProtKB-SubCell"/>
</dbReference>
<dbReference type="GO" id="GO:0140359">
    <property type="term" value="F:ABC-type transporter activity"/>
    <property type="evidence" value="ECO:0007669"/>
    <property type="project" value="InterPro"/>
</dbReference>
<dbReference type="GO" id="GO:0005524">
    <property type="term" value="F:ATP binding"/>
    <property type="evidence" value="ECO:0007669"/>
    <property type="project" value="UniProtKB-KW"/>
</dbReference>
<dbReference type="GO" id="GO:0016887">
    <property type="term" value="F:ATP hydrolysis activity"/>
    <property type="evidence" value="ECO:0007669"/>
    <property type="project" value="InterPro"/>
</dbReference>
<dbReference type="GO" id="GO:0042626">
    <property type="term" value="F:ATPase-coupled transmembrane transporter activity"/>
    <property type="evidence" value="ECO:0000250"/>
    <property type="project" value="SGD"/>
</dbReference>
<dbReference type="GO" id="GO:0009410">
    <property type="term" value="P:response to xenobiotic stimulus"/>
    <property type="evidence" value="ECO:0000315"/>
    <property type="project" value="SGD"/>
</dbReference>
<dbReference type="GO" id="GO:1990961">
    <property type="term" value="P:xenobiotic detoxification by transmembrane export across the plasma membrane"/>
    <property type="evidence" value="ECO:0007669"/>
    <property type="project" value="InterPro"/>
</dbReference>
<dbReference type="CDD" id="cd03233">
    <property type="entry name" value="ABCG_PDR_domain1"/>
    <property type="match status" value="1"/>
</dbReference>
<dbReference type="CDD" id="cd03232">
    <property type="entry name" value="ABCG_PDR_domain2"/>
    <property type="match status" value="1"/>
</dbReference>
<dbReference type="FunFam" id="3.40.50.300:FF:000054">
    <property type="entry name" value="ABC multidrug transporter atrF"/>
    <property type="match status" value="1"/>
</dbReference>
<dbReference type="FunFam" id="3.40.50.300:FF:001262">
    <property type="entry name" value="ABC transporter CDR4"/>
    <property type="match status" value="1"/>
</dbReference>
<dbReference type="Gene3D" id="3.40.50.300">
    <property type="entry name" value="P-loop containing nucleotide triphosphate hydrolases"/>
    <property type="match status" value="2"/>
</dbReference>
<dbReference type="InterPro" id="IPR003593">
    <property type="entry name" value="AAA+_ATPase"/>
</dbReference>
<dbReference type="InterPro" id="IPR013525">
    <property type="entry name" value="ABC2_TM"/>
</dbReference>
<dbReference type="InterPro" id="IPR029481">
    <property type="entry name" value="ABC_trans_N"/>
</dbReference>
<dbReference type="InterPro" id="IPR003439">
    <property type="entry name" value="ABC_transporter-like_ATP-bd"/>
</dbReference>
<dbReference type="InterPro" id="IPR017871">
    <property type="entry name" value="ABC_transporter-like_CS"/>
</dbReference>
<dbReference type="InterPro" id="IPR043926">
    <property type="entry name" value="ABCG_dom"/>
</dbReference>
<dbReference type="InterPro" id="IPR034001">
    <property type="entry name" value="ABCG_PDR_1"/>
</dbReference>
<dbReference type="InterPro" id="IPR034003">
    <property type="entry name" value="ABCG_PDR_2"/>
</dbReference>
<dbReference type="InterPro" id="IPR005285">
    <property type="entry name" value="Drug-R_PDR/CDR"/>
</dbReference>
<dbReference type="InterPro" id="IPR027417">
    <property type="entry name" value="P-loop_NTPase"/>
</dbReference>
<dbReference type="InterPro" id="IPR010929">
    <property type="entry name" value="PDR_CDR_ABC"/>
</dbReference>
<dbReference type="NCBIfam" id="TIGR00956">
    <property type="entry name" value="3a01205"/>
    <property type="match status" value="1"/>
</dbReference>
<dbReference type="PANTHER" id="PTHR19241">
    <property type="entry name" value="ATP-BINDING CASSETTE TRANSPORTER"/>
    <property type="match status" value="1"/>
</dbReference>
<dbReference type="Pfam" id="PF01061">
    <property type="entry name" value="ABC2_membrane"/>
    <property type="match status" value="2"/>
</dbReference>
<dbReference type="Pfam" id="PF19055">
    <property type="entry name" value="ABC2_membrane_7"/>
    <property type="match status" value="1"/>
</dbReference>
<dbReference type="Pfam" id="PF00005">
    <property type="entry name" value="ABC_tran"/>
    <property type="match status" value="2"/>
</dbReference>
<dbReference type="Pfam" id="PF14510">
    <property type="entry name" value="ABC_trans_N"/>
    <property type="match status" value="1"/>
</dbReference>
<dbReference type="Pfam" id="PF06422">
    <property type="entry name" value="PDR_CDR"/>
    <property type="match status" value="1"/>
</dbReference>
<dbReference type="SMART" id="SM00382">
    <property type="entry name" value="AAA"/>
    <property type="match status" value="2"/>
</dbReference>
<dbReference type="SUPFAM" id="SSF52540">
    <property type="entry name" value="P-loop containing nucleoside triphosphate hydrolases"/>
    <property type="match status" value="2"/>
</dbReference>
<dbReference type="PROSITE" id="PS00211">
    <property type="entry name" value="ABC_TRANSPORTER_1"/>
    <property type="match status" value="1"/>
</dbReference>
<dbReference type="PROSITE" id="PS50893">
    <property type="entry name" value="ABC_TRANSPORTER_2"/>
    <property type="match status" value="2"/>
</dbReference>
<feature type="chain" id="PRO_0000093446" description="ATP-dependent permease PDR15">
    <location>
        <begin position="1"/>
        <end position="1529"/>
    </location>
</feature>
<feature type="topological domain" description="Cytoplasmic" evidence="1">
    <location>
        <begin position="1"/>
        <end position="531"/>
    </location>
</feature>
<feature type="transmembrane region" description="Helical" evidence="1">
    <location>
        <begin position="532"/>
        <end position="552"/>
    </location>
</feature>
<feature type="topological domain" description="Extracellular" evidence="1">
    <location>
        <begin position="553"/>
        <end position="567"/>
    </location>
</feature>
<feature type="transmembrane region" description="Helical" evidence="1">
    <location>
        <begin position="568"/>
        <end position="588"/>
    </location>
</feature>
<feature type="topological domain" description="Cytoplasmic" evidence="1">
    <location>
        <begin position="589"/>
        <end position="617"/>
    </location>
</feature>
<feature type="transmembrane region" description="Helical" evidence="1">
    <location>
        <begin position="618"/>
        <end position="638"/>
    </location>
</feature>
<feature type="topological domain" description="Extracellular" evidence="1">
    <location>
        <begin position="639"/>
        <end position="642"/>
    </location>
</feature>
<feature type="transmembrane region" description="Helical" evidence="1">
    <location>
        <begin position="643"/>
        <end position="663"/>
    </location>
</feature>
<feature type="topological domain" description="Cytoplasmic" evidence="1">
    <location>
        <begin position="664"/>
        <end position="699"/>
    </location>
</feature>
<feature type="transmembrane region" description="Helical" evidence="1">
    <location>
        <begin position="700"/>
        <end position="720"/>
    </location>
</feature>
<feature type="topological domain" description="Extracellular" evidence="1">
    <location>
        <begin position="721"/>
        <end position="783"/>
    </location>
</feature>
<feature type="transmembrane region" description="Helical" evidence="1">
    <location>
        <begin position="784"/>
        <end position="804"/>
    </location>
</feature>
<feature type="topological domain" description="Cytoplasmic" evidence="1">
    <location>
        <begin position="805"/>
        <end position="1219"/>
    </location>
</feature>
<feature type="transmembrane region" description="Helical" evidence="1">
    <location>
        <begin position="1220"/>
        <end position="1240"/>
    </location>
</feature>
<feature type="topological domain" description="Extracellular" evidence="1">
    <location>
        <begin position="1241"/>
        <end position="1312"/>
    </location>
</feature>
<feature type="transmembrane region" description="Helical" evidence="1">
    <location>
        <begin position="1313"/>
        <end position="1333"/>
    </location>
</feature>
<feature type="topological domain" description="Cytoplasmic" evidence="1">
    <location>
        <begin position="1334"/>
        <end position="1340"/>
    </location>
</feature>
<feature type="transmembrane region" description="Helical" evidence="1">
    <location>
        <begin position="1341"/>
        <end position="1361"/>
    </location>
</feature>
<feature type="topological domain" description="Extracellular" evidence="1">
    <location>
        <begin position="1362"/>
        <end position="1368"/>
    </location>
</feature>
<feature type="transmembrane region" description="Helical" evidence="1">
    <location>
        <begin position="1369"/>
        <end position="1389"/>
    </location>
</feature>
<feature type="topological domain" description="Cytoplasmic" evidence="1">
    <location>
        <begin position="1390"/>
        <end position="1396"/>
    </location>
</feature>
<feature type="transmembrane region" description="Helical" evidence="1">
    <location>
        <begin position="1397"/>
        <end position="1417"/>
    </location>
</feature>
<feature type="topological domain" description="Extracellular" evidence="1">
    <location>
        <begin position="1418"/>
        <end position="1492"/>
    </location>
</feature>
<feature type="transmembrane region" description="Helical" evidence="1">
    <location>
        <begin position="1493"/>
        <end position="1513"/>
    </location>
</feature>
<feature type="topological domain" description="Cytoplasmic" evidence="1">
    <location>
        <begin position="1514"/>
        <end position="1529"/>
    </location>
</feature>
<feature type="domain" description="ABC transporter 1" evidence="2">
    <location>
        <begin position="171"/>
        <end position="420"/>
    </location>
</feature>
<feature type="domain" description="ABC transporter 2" evidence="2">
    <location>
        <begin position="884"/>
        <end position="1127"/>
    </location>
</feature>
<feature type="region of interest" description="Disordered" evidence="3">
    <location>
        <begin position="1"/>
        <end position="38"/>
    </location>
</feature>
<feature type="region of interest" description="Disordered" evidence="3">
    <location>
        <begin position="829"/>
        <end position="873"/>
    </location>
</feature>
<feature type="compositionally biased region" description="Basic and acidic residues" evidence="3">
    <location>
        <begin position="1"/>
        <end position="13"/>
    </location>
</feature>
<feature type="compositionally biased region" description="Low complexity" evidence="3">
    <location>
        <begin position="14"/>
        <end position="24"/>
    </location>
</feature>
<feature type="compositionally biased region" description="Basic and acidic residues" evidence="3">
    <location>
        <begin position="829"/>
        <end position="840"/>
    </location>
</feature>
<feature type="binding site" evidence="2">
    <location>
        <begin position="920"/>
        <end position="927"/>
    </location>
    <ligand>
        <name>ATP</name>
        <dbReference type="ChEBI" id="CHEBI:30616"/>
    </ligand>
</feature>
<feature type="glycosylation site" description="N-linked (GlcNAc...) asparagine" evidence="1">
    <location>
        <position position="558"/>
    </location>
</feature>
<feature type="glycosylation site" description="N-linked (GlcNAc...) asparagine" evidence="1">
    <location>
        <position position="744"/>
    </location>
</feature>